<keyword id="KW-0378">Hydrolase</keyword>
<keyword id="KW-0460">Magnesium</keyword>
<keyword id="KW-0479">Metal-binding</keyword>
<keyword id="KW-0546">Nucleotide metabolism</keyword>
<keyword id="KW-1185">Reference proteome</keyword>
<protein>
    <recommendedName>
        <fullName evidence="1">Deoxyuridine 5'-triphosphate nucleotidohydrolase</fullName>
        <shortName evidence="1">dUTPase</shortName>
        <ecNumber evidence="1">3.6.1.23</ecNumber>
    </recommendedName>
    <alternativeName>
        <fullName evidence="1">dUTP pyrophosphatase</fullName>
    </alternativeName>
</protein>
<dbReference type="EC" id="3.6.1.23" evidence="1"/>
<dbReference type="EMBL" id="CU468135">
    <property type="protein sequence ID" value="CAO95110.1"/>
    <property type="molecule type" value="Genomic_DNA"/>
</dbReference>
<dbReference type="RefSeq" id="WP_012439838.1">
    <property type="nucleotide sequence ID" value="NC_010694.1"/>
</dbReference>
<dbReference type="SMR" id="B2VF80"/>
<dbReference type="STRING" id="465817.ETA_00640"/>
<dbReference type="KEGG" id="eta:ETA_00640"/>
<dbReference type="eggNOG" id="COG0756">
    <property type="taxonomic scope" value="Bacteria"/>
</dbReference>
<dbReference type="HOGENOM" id="CLU_068508_1_1_6"/>
<dbReference type="UniPathway" id="UPA00610">
    <property type="reaction ID" value="UER00666"/>
</dbReference>
<dbReference type="Proteomes" id="UP000001726">
    <property type="component" value="Chromosome"/>
</dbReference>
<dbReference type="GO" id="GO:0004170">
    <property type="term" value="F:dUTP diphosphatase activity"/>
    <property type="evidence" value="ECO:0007669"/>
    <property type="project" value="UniProtKB-UniRule"/>
</dbReference>
<dbReference type="GO" id="GO:0000287">
    <property type="term" value="F:magnesium ion binding"/>
    <property type="evidence" value="ECO:0007669"/>
    <property type="project" value="UniProtKB-UniRule"/>
</dbReference>
<dbReference type="GO" id="GO:0006226">
    <property type="term" value="P:dUMP biosynthetic process"/>
    <property type="evidence" value="ECO:0007669"/>
    <property type="project" value="UniProtKB-UniRule"/>
</dbReference>
<dbReference type="GO" id="GO:0046081">
    <property type="term" value="P:dUTP catabolic process"/>
    <property type="evidence" value="ECO:0007669"/>
    <property type="project" value="InterPro"/>
</dbReference>
<dbReference type="CDD" id="cd07557">
    <property type="entry name" value="trimeric_dUTPase"/>
    <property type="match status" value="1"/>
</dbReference>
<dbReference type="FunFam" id="2.70.40.10:FF:000002">
    <property type="entry name" value="dUTP diphosphatase"/>
    <property type="match status" value="1"/>
</dbReference>
<dbReference type="Gene3D" id="2.70.40.10">
    <property type="match status" value="1"/>
</dbReference>
<dbReference type="HAMAP" id="MF_00116">
    <property type="entry name" value="dUTPase_bact"/>
    <property type="match status" value="1"/>
</dbReference>
<dbReference type="InterPro" id="IPR008181">
    <property type="entry name" value="dUTPase"/>
</dbReference>
<dbReference type="InterPro" id="IPR029054">
    <property type="entry name" value="dUTPase-like"/>
</dbReference>
<dbReference type="InterPro" id="IPR036157">
    <property type="entry name" value="dUTPase-like_sf"/>
</dbReference>
<dbReference type="InterPro" id="IPR033704">
    <property type="entry name" value="dUTPase_trimeric"/>
</dbReference>
<dbReference type="NCBIfam" id="TIGR00576">
    <property type="entry name" value="dut"/>
    <property type="match status" value="1"/>
</dbReference>
<dbReference type="NCBIfam" id="NF001862">
    <property type="entry name" value="PRK00601.1"/>
    <property type="match status" value="1"/>
</dbReference>
<dbReference type="PANTHER" id="PTHR11241">
    <property type="entry name" value="DEOXYURIDINE 5'-TRIPHOSPHATE NUCLEOTIDOHYDROLASE"/>
    <property type="match status" value="1"/>
</dbReference>
<dbReference type="PANTHER" id="PTHR11241:SF0">
    <property type="entry name" value="DEOXYURIDINE 5'-TRIPHOSPHATE NUCLEOTIDOHYDROLASE"/>
    <property type="match status" value="1"/>
</dbReference>
<dbReference type="Pfam" id="PF00692">
    <property type="entry name" value="dUTPase"/>
    <property type="match status" value="1"/>
</dbReference>
<dbReference type="SUPFAM" id="SSF51283">
    <property type="entry name" value="dUTPase-like"/>
    <property type="match status" value="1"/>
</dbReference>
<name>DUT_ERWT9</name>
<gene>
    <name evidence="1" type="primary">dut</name>
    <name type="ordered locus">ETA_00640</name>
</gene>
<reference key="1">
    <citation type="journal article" date="2008" name="Environ. Microbiol.">
        <title>The genome of Erwinia tasmaniensis strain Et1/99, a non-pathogenic bacterium in the genus Erwinia.</title>
        <authorList>
            <person name="Kube M."/>
            <person name="Migdoll A.M."/>
            <person name="Mueller I."/>
            <person name="Kuhl H."/>
            <person name="Beck A."/>
            <person name="Reinhardt R."/>
            <person name="Geider K."/>
        </authorList>
    </citation>
    <scope>NUCLEOTIDE SEQUENCE [LARGE SCALE GENOMIC DNA]</scope>
    <source>
        <strain>DSM 17950 / CFBP 7177 / CIP 109463 / NCPPB 4357 / Et1/99</strain>
    </source>
</reference>
<sequence>MMKKIDVKILDARVGTDFPLPTYATSGSAGLDLRACLNEATVLQPGATTLLPTGLAIHIADPQLAAVILPRSGLGHKHGVVLGNLVGLIDSDYQGPLMVSVWNRGQDSFTIEPGERIAQMVFVPVVQAEFNLVNDFDASVRGEGGFGHSGRQ</sequence>
<feature type="chain" id="PRO_1000094963" description="Deoxyuridine 5'-triphosphate nucleotidohydrolase">
    <location>
        <begin position="1"/>
        <end position="152"/>
    </location>
</feature>
<feature type="binding site" evidence="1">
    <location>
        <begin position="71"/>
        <end position="73"/>
    </location>
    <ligand>
        <name>substrate</name>
    </ligand>
</feature>
<feature type="binding site" evidence="1">
    <location>
        <position position="84"/>
    </location>
    <ligand>
        <name>substrate</name>
    </ligand>
</feature>
<feature type="binding site" evidence="1">
    <location>
        <begin position="88"/>
        <end position="90"/>
    </location>
    <ligand>
        <name>substrate</name>
    </ligand>
</feature>
<feature type="binding site" evidence="1">
    <location>
        <position position="98"/>
    </location>
    <ligand>
        <name>substrate</name>
    </ligand>
</feature>
<evidence type="ECO:0000255" key="1">
    <source>
        <dbReference type="HAMAP-Rule" id="MF_00116"/>
    </source>
</evidence>
<proteinExistence type="inferred from homology"/>
<organism>
    <name type="scientific">Erwinia tasmaniensis (strain DSM 17950 / CFBP 7177 / CIP 109463 / NCPPB 4357 / Et1/99)</name>
    <dbReference type="NCBI Taxonomy" id="465817"/>
    <lineage>
        <taxon>Bacteria</taxon>
        <taxon>Pseudomonadati</taxon>
        <taxon>Pseudomonadota</taxon>
        <taxon>Gammaproteobacteria</taxon>
        <taxon>Enterobacterales</taxon>
        <taxon>Erwiniaceae</taxon>
        <taxon>Erwinia</taxon>
    </lineage>
</organism>
<comment type="function">
    <text evidence="1">This enzyme is involved in nucleotide metabolism: it produces dUMP, the immediate precursor of thymidine nucleotides and it decreases the intracellular concentration of dUTP so that uracil cannot be incorporated into DNA.</text>
</comment>
<comment type="catalytic activity">
    <reaction evidence="1">
        <text>dUTP + H2O = dUMP + diphosphate + H(+)</text>
        <dbReference type="Rhea" id="RHEA:10248"/>
        <dbReference type="ChEBI" id="CHEBI:15377"/>
        <dbReference type="ChEBI" id="CHEBI:15378"/>
        <dbReference type="ChEBI" id="CHEBI:33019"/>
        <dbReference type="ChEBI" id="CHEBI:61555"/>
        <dbReference type="ChEBI" id="CHEBI:246422"/>
        <dbReference type="EC" id="3.6.1.23"/>
    </reaction>
</comment>
<comment type="cofactor">
    <cofactor evidence="1">
        <name>Mg(2+)</name>
        <dbReference type="ChEBI" id="CHEBI:18420"/>
    </cofactor>
</comment>
<comment type="pathway">
    <text evidence="1">Pyrimidine metabolism; dUMP biosynthesis; dUMP from dCTP (dUTP route): step 2/2.</text>
</comment>
<comment type="similarity">
    <text evidence="1">Belongs to the dUTPase family.</text>
</comment>
<accession>B2VF80</accession>